<protein>
    <recommendedName>
        <fullName evidence="1">Tetraacyldisaccharide 4'-kinase</fullName>
        <ecNumber evidence="1">2.7.1.130</ecNumber>
    </recommendedName>
    <alternativeName>
        <fullName evidence="1">Lipid A 4'-kinase</fullName>
    </alternativeName>
</protein>
<dbReference type="EC" id="2.7.1.130" evidence="1"/>
<dbReference type="EMBL" id="CP001111">
    <property type="protein sequence ID" value="ACF51104.1"/>
    <property type="molecule type" value="Genomic_DNA"/>
</dbReference>
<dbReference type="RefSeq" id="WP_012510611.1">
    <property type="nucleotide sequence ID" value="NC_011071.1"/>
</dbReference>
<dbReference type="SMR" id="B4SQP9"/>
<dbReference type="STRING" id="391008.Smal_1399"/>
<dbReference type="KEGG" id="smt:Smal_1399"/>
<dbReference type="eggNOG" id="COG1663">
    <property type="taxonomic scope" value="Bacteria"/>
</dbReference>
<dbReference type="HOGENOM" id="CLU_038816_2_0_6"/>
<dbReference type="OrthoDB" id="9766423at2"/>
<dbReference type="UniPathway" id="UPA00359">
    <property type="reaction ID" value="UER00482"/>
</dbReference>
<dbReference type="Proteomes" id="UP000001867">
    <property type="component" value="Chromosome"/>
</dbReference>
<dbReference type="GO" id="GO:0005886">
    <property type="term" value="C:plasma membrane"/>
    <property type="evidence" value="ECO:0007669"/>
    <property type="project" value="TreeGrafter"/>
</dbReference>
<dbReference type="GO" id="GO:0005524">
    <property type="term" value="F:ATP binding"/>
    <property type="evidence" value="ECO:0007669"/>
    <property type="project" value="UniProtKB-UniRule"/>
</dbReference>
<dbReference type="GO" id="GO:0009029">
    <property type="term" value="F:tetraacyldisaccharide 4'-kinase activity"/>
    <property type="evidence" value="ECO:0007669"/>
    <property type="project" value="UniProtKB-UniRule"/>
</dbReference>
<dbReference type="GO" id="GO:0009245">
    <property type="term" value="P:lipid A biosynthetic process"/>
    <property type="evidence" value="ECO:0007669"/>
    <property type="project" value="UniProtKB-UniRule"/>
</dbReference>
<dbReference type="GO" id="GO:0009244">
    <property type="term" value="P:lipopolysaccharide core region biosynthetic process"/>
    <property type="evidence" value="ECO:0007669"/>
    <property type="project" value="TreeGrafter"/>
</dbReference>
<dbReference type="HAMAP" id="MF_00409">
    <property type="entry name" value="LpxK"/>
    <property type="match status" value="1"/>
</dbReference>
<dbReference type="InterPro" id="IPR003758">
    <property type="entry name" value="LpxK"/>
</dbReference>
<dbReference type="InterPro" id="IPR027417">
    <property type="entry name" value="P-loop_NTPase"/>
</dbReference>
<dbReference type="NCBIfam" id="TIGR00682">
    <property type="entry name" value="lpxK"/>
    <property type="match status" value="1"/>
</dbReference>
<dbReference type="PANTHER" id="PTHR42724">
    <property type="entry name" value="TETRAACYLDISACCHARIDE 4'-KINASE"/>
    <property type="match status" value="1"/>
</dbReference>
<dbReference type="PANTHER" id="PTHR42724:SF1">
    <property type="entry name" value="TETRAACYLDISACCHARIDE 4'-KINASE, MITOCHONDRIAL-RELATED"/>
    <property type="match status" value="1"/>
</dbReference>
<dbReference type="Pfam" id="PF02606">
    <property type="entry name" value="LpxK"/>
    <property type="match status" value="1"/>
</dbReference>
<dbReference type="SUPFAM" id="SSF52540">
    <property type="entry name" value="P-loop containing nucleoside triphosphate hydrolases"/>
    <property type="match status" value="1"/>
</dbReference>
<accession>B4SQP9</accession>
<comment type="function">
    <text evidence="1">Transfers the gamma-phosphate of ATP to the 4'-position of a tetraacyldisaccharide 1-phosphate intermediate (termed DS-1-P) to form tetraacyldisaccharide 1,4'-bis-phosphate (lipid IVA).</text>
</comment>
<comment type="catalytic activity">
    <reaction evidence="1">
        <text>a lipid A disaccharide + ATP = a lipid IVA + ADP + H(+)</text>
        <dbReference type="Rhea" id="RHEA:67840"/>
        <dbReference type="ChEBI" id="CHEBI:15378"/>
        <dbReference type="ChEBI" id="CHEBI:30616"/>
        <dbReference type="ChEBI" id="CHEBI:176343"/>
        <dbReference type="ChEBI" id="CHEBI:176425"/>
        <dbReference type="ChEBI" id="CHEBI:456216"/>
        <dbReference type="EC" id="2.7.1.130"/>
    </reaction>
</comment>
<comment type="pathway">
    <text evidence="1">Glycolipid biosynthesis; lipid IV(A) biosynthesis; lipid IV(A) from (3R)-3-hydroxytetradecanoyl-[acyl-carrier-protein] and UDP-N-acetyl-alpha-D-glucosamine: step 6/6.</text>
</comment>
<comment type="similarity">
    <text evidence="1">Belongs to the LpxK family.</text>
</comment>
<reference key="1">
    <citation type="submission" date="2008-06" db="EMBL/GenBank/DDBJ databases">
        <title>Complete sequence of Stenotrophomonas maltophilia R551-3.</title>
        <authorList>
            <consortium name="US DOE Joint Genome Institute"/>
            <person name="Lucas S."/>
            <person name="Copeland A."/>
            <person name="Lapidus A."/>
            <person name="Glavina del Rio T."/>
            <person name="Dalin E."/>
            <person name="Tice H."/>
            <person name="Pitluck S."/>
            <person name="Chain P."/>
            <person name="Malfatti S."/>
            <person name="Shin M."/>
            <person name="Vergez L."/>
            <person name="Lang D."/>
            <person name="Schmutz J."/>
            <person name="Larimer F."/>
            <person name="Land M."/>
            <person name="Hauser L."/>
            <person name="Kyrpides N."/>
            <person name="Mikhailova N."/>
            <person name="Taghavi S."/>
            <person name="Monchy S."/>
            <person name="Newman L."/>
            <person name="Vangronsveld J."/>
            <person name="van der Lelie D."/>
            <person name="Richardson P."/>
        </authorList>
    </citation>
    <scope>NUCLEOTIDE SEQUENCE [LARGE SCALE GENOMIC DNA]</scope>
    <source>
        <strain>R551-3</strain>
    </source>
</reference>
<sequence length="339" mass="37198">MAGKGTQTPPYWYDGSPVPWAMRLLAPLYAGVTALRRRAYRRGWRKHYTLPVPVIVVGNITAGGTGKTPLTIALVERLRAAGWKPGVASRGYGREDADKPLWVQADTPTAKGGDEPVLIAWKTGVPVRVDRDRVAAGKALIEAGCDVIVCDDGLQHYRLARDIEIEVVDAQRRYGNGRMIPAGPLREPVSRASECDFRVVNLGQADEESAAQACGFGQWPMALHIDSAQPLAGGRARPLAYFKGQRVHAVAGIAHPQRFFDMLRARGIGVVPHAFADHQAYQPQDLSFGSQLPVLMTEKDAVKCRAFGNDWYYAVPLRAELPAAFWVALTDRLDKLRPN</sequence>
<name>LPXK_STRM5</name>
<proteinExistence type="inferred from homology"/>
<evidence type="ECO:0000255" key="1">
    <source>
        <dbReference type="HAMAP-Rule" id="MF_00409"/>
    </source>
</evidence>
<feature type="chain" id="PRO_1000123748" description="Tetraacyldisaccharide 4'-kinase">
    <location>
        <begin position="1"/>
        <end position="339"/>
    </location>
</feature>
<feature type="binding site" evidence="1">
    <location>
        <begin position="61"/>
        <end position="68"/>
    </location>
    <ligand>
        <name>ATP</name>
        <dbReference type="ChEBI" id="CHEBI:30616"/>
    </ligand>
</feature>
<organism>
    <name type="scientific">Stenotrophomonas maltophilia (strain R551-3)</name>
    <dbReference type="NCBI Taxonomy" id="391008"/>
    <lineage>
        <taxon>Bacteria</taxon>
        <taxon>Pseudomonadati</taxon>
        <taxon>Pseudomonadota</taxon>
        <taxon>Gammaproteobacteria</taxon>
        <taxon>Lysobacterales</taxon>
        <taxon>Lysobacteraceae</taxon>
        <taxon>Stenotrophomonas</taxon>
        <taxon>Stenotrophomonas maltophilia group</taxon>
    </lineage>
</organism>
<keyword id="KW-0067">ATP-binding</keyword>
<keyword id="KW-0418">Kinase</keyword>
<keyword id="KW-0441">Lipid A biosynthesis</keyword>
<keyword id="KW-0444">Lipid biosynthesis</keyword>
<keyword id="KW-0443">Lipid metabolism</keyword>
<keyword id="KW-0547">Nucleotide-binding</keyword>
<keyword id="KW-0808">Transferase</keyword>
<gene>
    <name evidence="1" type="primary">lpxK</name>
    <name type="ordered locus">Smal_1399</name>
</gene>